<dbReference type="EMBL" id="AE017282">
    <property type="protein sequence ID" value="AAU90418.1"/>
    <property type="molecule type" value="Genomic_DNA"/>
</dbReference>
<dbReference type="RefSeq" id="WP_010959683.1">
    <property type="nucleotide sequence ID" value="NC_002977.6"/>
</dbReference>
<dbReference type="SMR" id="Q60BZ1"/>
<dbReference type="STRING" id="243233.MCA0322"/>
<dbReference type="GeneID" id="88222663"/>
<dbReference type="KEGG" id="mca:MCA0322"/>
<dbReference type="eggNOG" id="COG0254">
    <property type="taxonomic scope" value="Bacteria"/>
</dbReference>
<dbReference type="HOGENOM" id="CLU_114306_4_0_6"/>
<dbReference type="Proteomes" id="UP000006821">
    <property type="component" value="Chromosome"/>
</dbReference>
<dbReference type="GO" id="GO:1990904">
    <property type="term" value="C:ribonucleoprotein complex"/>
    <property type="evidence" value="ECO:0007669"/>
    <property type="project" value="UniProtKB-KW"/>
</dbReference>
<dbReference type="GO" id="GO:0005840">
    <property type="term" value="C:ribosome"/>
    <property type="evidence" value="ECO:0007669"/>
    <property type="project" value="UniProtKB-KW"/>
</dbReference>
<dbReference type="GO" id="GO:0046872">
    <property type="term" value="F:metal ion binding"/>
    <property type="evidence" value="ECO:0007669"/>
    <property type="project" value="UniProtKB-KW"/>
</dbReference>
<dbReference type="GO" id="GO:0019843">
    <property type="term" value="F:rRNA binding"/>
    <property type="evidence" value="ECO:0007669"/>
    <property type="project" value="UniProtKB-KW"/>
</dbReference>
<dbReference type="GO" id="GO:0003735">
    <property type="term" value="F:structural constituent of ribosome"/>
    <property type="evidence" value="ECO:0007669"/>
    <property type="project" value="InterPro"/>
</dbReference>
<dbReference type="GO" id="GO:0006412">
    <property type="term" value="P:translation"/>
    <property type="evidence" value="ECO:0007669"/>
    <property type="project" value="UniProtKB-UniRule"/>
</dbReference>
<dbReference type="Gene3D" id="4.10.830.30">
    <property type="entry name" value="Ribosomal protein L31"/>
    <property type="match status" value="1"/>
</dbReference>
<dbReference type="HAMAP" id="MF_00501">
    <property type="entry name" value="Ribosomal_bL31_1"/>
    <property type="match status" value="1"/>
</dbReference>
<dbReference type="InterPro" id="IPR034704">
    <property type="entry name" value="Ribosomal_bL28/bL31-like_sf"/>
</dbReference>
<dbReference type="InterPro" id="IPR002150">
    <property type="entry name" value="Ribosomal_bL31"/>
</dbReference>
<dbReference type="InterPro" id="IPR027491">
    <property type="entry name" value="Ribosomal_bL31_A"/>
</dbReference>
<dbReference type="InterPro" id="IPR042105">
    <property type="entry name" value="Ribosomal_bL31_sf"/>
</dbReference>
<dbReference type="NCBIfam" id="TIGR00105">
    <property type="entry name" value="L31"/>
    <property type="match status" value="1"/>
</dbReference>
<dbReference type="NCBIfam" id="NF000612">
    <property type="entry name" value="PRK00019.1"/>
    <property type="match status" value="1"/>
</dbReference>
<dbReference type="NCBIfam" id="NF001809">
    <property type="entry name" value="PRK00528.1"/>
    <property type="match status" value="1"/>
</dbReference>
<dbReference type="PANTHER" id="PTHR33280">
    <property type="entry name" value="50S RIBOSOMAL PROTEIN L31, CHLOROPLASTIC"/>
    <property type="match status" value="1"/>
</dbReference>
<dbReference type="PANTHER" id="PTHR33280:SF6">
    <property type="entry name" value="LARGE RIBOSOMAL SUBUNIT PROTEIN BL31A"/>
    <property type="match status" value="1"/>
</dbReference>
<dbReference type="Pfam" id="PF01197">
    <property type="entry name" value="Ribosomal_L31"/>
    <property type="match status" value="1"/>
</dbReference>
<dbReference type="PRINTS" id="PR01249">
    <property type="entry name" value="RIBOSOMALL31"/>
</dbReference>
<dbReference type="SUPFAM" id="SSF143800">
    <property type="entry name" value="L28p-like"/>
    <property type="match status" value="1"/>
</dbReference>
<dbReference type="PROSITE" id="PS01143">
    <property type="entry name" value="RIBOSOMAL_L31"/>
    <property type="match status" value="1"/>
</dbReference>
<keyword id="KW-0479">Metal-binding</keyword>
<keyword id="KW-1185">Reference proteome</keyword>
<keyword id="KW-0687">Ribonucleoprotein</keyword>
<keyword id="KW-0689">Ribosomal protein</keyword>
<keyword id="KW-0694">RNA-binding</keyword>
<keyword id="KW-0699">rRNA-binding</keyword>
<keyword id="KW-0862">Zinc</keyword>
<evidence type="ECO:0000255" key="1">
    <source>
        <dbReference type="HAMAP-Rule" id="MF_00501"/>
    </source>
</evidence>
<evidence type="ECO:0000305" key="2"/>
<proteinExistence type="inferred from homology"/>
<accession>Q60BZ1</accession>
<comment type="function">
    <text evidence="1">Binds the 23S rRNA.</text>
</comment>
<comment type="cofactor">
    <cofactor evidence="1">
        <name>Zn(2+)</name>
        <dbReference type="ChEBI" id="CHEBI:29105"/>
    </cofactor>
    <text evidence="1">Binds 1 zinc ion per subunit.</text>
</comment>
<comment type="subunit">
    <text evidence="1">Part of the 50S ribosomal subunit.</text>
</comment>
<comment type="similarity">
    <text evidence="1">Belongs to the bacterial ribosomal protein bL31 family. Type A subfamily.</text>
</comment>
<gene>
    <name evidence="1" type="primary">rpmE</name>
    <name type="ordered locus">MCA0322</name>
</gene>
<protein>
    <recommendedName>
        <fullName evidence="1">Large ribosomal subunit protein bL31</fullName>
    </recommendedName>
    <alternativeName>
        <fullName evidence="2">50S ribosomal protein L31</fullName>
    </alternativeName>
</protein>
<sequence length="67" mass="7545">MKPDIHPDYTTVTVSCSCGNTFETRSTIGKDFHVEVCSACHPFYTGKQKIVDTAGRVDKFRRKYGRG</sequence>
<reference key="1">
    <citation type="journal article" date="2004" name="PLoS Biol.">
        <title>Genomic insights into methanotrophy: the complete genome sequence of Methylococcus capsulatus (Bath).</title>
        <authorList>
            <person name="Ward N.L."/>
            <person name="Larsen O."/>
            <person name="Sakwa J."/>
            <person name="Bruseth L."/>
            <person name="Khouri H.M."/>
            <person name="Durkin A.S."/>
            <person name="Dimitrov G."/>
            <person name="Jiang L."/>
            <person name="Scanlan D."/>
            <person name="Kang K.H."/>
            <person name="Lewis M.R."/>
            <person name="Nelson K.E."/>
            <person name="Methe B.A."/>
            <person name="Wu M."/>
            <person name="Heidelberg J.F."/>
            <person name="Paulsen I.T."/>
            <person name="Fouts D.E."/>
            <person name="Ravel J."/>
            <person name="Tettelin H."/>
            <person name="Ren Q."/>
            <person name="Read T.D."/>
            <person name="DeBoy R.T."/>
            <person name="Seshadri R."/>
            <person name="Salzberg S.L."/>
            <person name="Jensen H.B."/>
            <person name="Birkeland N.K."/>
            <person name="Nelson W.C."/>
            <person name="Dodson R.J."/>
            <person name="Grindhaug S.H."/>
            <person name="Holt I.E."/>
            <person name="Eidhammer I."/>
            <person name="Jonasen I."/>
            <person name="Vanaken S."/>
            <person name="Utterback T.R."/>
            <person name="Feldblyum T.V."/>
            <person name="Fraser C.M."/>
            <person name="Lillehaug J.R."/>
            <person name="Eisen J.A."/>
        </authorList>
    </citation>
    <scope>NUCLEOTIDE SEQUENCE [LARGE SCALE GENOMIC DNA]</scope>
    <source>
        <strain>ATCC 33009 / NCIMB 11132 / Bath</strain>
    </source>
</reference>
<feature type="chain" id="PRO_0000173125" description="Large ribosomal subunit protein bL31">
    <location>
        <begin position="1"/>
        <end position="67"/>
    </location>
</feature>
<feature type="binding site" evidence="1">
    <location>
        <position position="16"/>
    </location>
    <ligand>
        <name>Zn(2+)</name>
        <dbReference type="ChEBI" id="CHEBI:29105"/>
    </ligand>
</feature>
<feature type="binding site" evidence="1">
    <location>
        <position position="18"/>
    </location>
    <ligand>
        <name>Zn(2+)</name>
        <dbReference type="ChEBI" id="CHEBI:29105"/>
    </ligand>
</feature>
<feature type="binding site" evidence="1">
    <location>
        <position position="37"/>
    </location>
    <ligand>
        <name>Zn(2+)</name>
        <dbReference type="ChEBI" id="CHEBI:29105"/>
    </ligand>
</feature>
<feature type="binding site" evidence="1">
    <location>
        <position position="40"/>
    </location>
    <ligand>
        <name>Zn(2+)</name>
        <dbReference type="ChEBI" id="CHEBI:29105"/>
    </ligand>
</feature>
<organism>
    <name type="scientific">Methylococcus capsulatus (strain ATCC 33009 / NCIMB 11132 / Bath)</name>
    <dbReference type="NCBI Taxonomy" id="243233"/>
    <lineage>
        <taxon>Bacteria</taxon>
        <taxon>Pseudomonadati</taxon>
        <taxon>Pseudomonadota</taxon>
        <taxon>Gammaproteobacteria</taxon>
        <taxon>Methylococcales</taxon>
        <taxon>Methylococcaceae</taxon>
        <taxon>Methylococcus</taxon>
    </lineage>
</organism>
<name>RL31_METCA</name>